<reference key="1">
    <citation type="journal article" date="2011" name="Proc. Natl. Acad. Sci. U.S.A.">
        <title>Genomic anatomy of Escherichia coli O157:H7 outbreaks.</title>
        <authorList>
            <person name="Eppinger M."/>
            <person name="Mammel M.K."/>
            <person name="Leclerc J.E."/>
            <person name="Ravel J."/>
            <person name="Cebula T.A."/>
        </authorList>
    </citation>
    <scope>NUCLEOTIDE SEQUENCE [LARGE SCALE GENOMIC DNA]</scope>
    <source>
        <strain>EC4115 / EHEC</strain>
    </source>
</reference>
<proteinExistence type="inferred from homology"/>
<evidence type="ECO:0000255" key="1">
    <source>
        <dbReference type="HAMAP-Rule" id="MF_00531"/>
    </source>
</evidence>
<evidence type="ECO:0000305" key="2"/>
<protein>
    <recommendedName>
        <fullName evidence="1">Small ribosomal subunit protein uS19</fullName>
    </recommendedName>
    <alternativeName>
        <fullName evidence="2">30S ribosomal protein S19</fullName>
    </alternativeName>
</protein>
<dbReference type="EMBL" id="CP001164">
    <property type="protein sequence ID" value="ACI35197.1"/>
    <property type="molecule type" value="Genomic_DNA"/>
</dbReference>
<dbReference type="RefSeq" id="WP_001138117.1">
    <property type="nucleotide sequence ID" value="NC_011353.1"/>
</dbReference>
<dbReference type="SMR" id="B5YTN7"/>
<dbReference type="GeneID" id="98390438"/>
<dbReference type="KEGG" id="ecf:ECH74115_4639"/>
<dbReference type="HOGENOM" id="CLU_144911_0_1_6"/>
<dbReference type="GO" id="GO:0005737">
    <property type="term" value="C:cytoplasm"/>
    <property type="evidence" value="ECO:0007669"/>
    <property type="project" value="UniProtKB-ARBA"/>
</dbReference>
<dbReference type="GO" id="GO:0015935">
    <property type="term" value="C:small ribosomal subunit"/>
    <property type="evidence" value="ECO:0007669"/>
    <property type="project" value="InterPro"/>
</dbReference>
<dbReference type="GO" id="GO:0019843">
    <property type="term" value="F:rRNA binding"/>
    <property type="evidence" value="ECO:0007669"/>
    <property type="project" value="UniProtKB-UniRule"/>
</dbReference>
<dbReference type="GO" id="GO:0003735">
    <property type="term" value="F:structural constituent of ribosome"/>
    <property type="evidence" value="ECO:0007669"/>
    <property type="project" value="InterPro"/>
</dbReference>
<dbReference type="GO" id="GO:0000028">
    <property type="term" value="P:ribosomal small subunit assembly"/>
    <property type="evidence" value="ECO:0007669"/>
    <property type="project" value="TreeGrafter"/>
</dbReference>
<dbReference type="GO" id="GO:0006412">
    <property type="term" value="P:translation"/>
    <property type="evidence" value="ECO:0007669"/>
    <property type="project" value="UniProtKB-UniRule"/>
</dbReference>
<dbReference type="FunFam" id="3.30.860.10:FF:000001">
    <property type="entry name" value="30S ribosomal protein S19"/>
    <property type="match status" value="1"/>
</dbReference>
<dbReference type="Gene3D" id="3.30.860.10">
    <property type="entry name" value="30s Ribosomal Protein S19, Chain A"/>
    <property type="match status" value="1"/>
</dbReference>
<dbReference type="HAMAP" id="MF_00531">
    <property type="entry name" value="Ribosomal_uS19"/>
    <property type="match status" value="1"/>
</dbReference>
<dbReference type="InterPro" id="IPR002222">
    <property type="entry name" value="Ribosomal_uS19"/>
</dbReference>
<dbReference type="InterPro" id="IPR005732">
    <property type="entry name" value="Ribosomal_uS19_bac-type"/>
</dbReference>
<dbReference type="InterPro" id="IPR020934">
    <property type="entry name" value="Ribosomal_uS19_CS"/>
</dbReference>
<dbReference type="InterPro" id="IPR023575">
    <property type="entry name" value="Ribosomal_uS19_SF"/>
</dbReference>
<dbReference type="NCBIfam" id="TIGR01050">
    <property type="entry name" value="rpsS_bact"/>
    <property type="match status" value="1"/>
</dbReference>
<dbReference type="PANTHER" id="PTHR11880">
    <property type="entry name" value="RIBOSOMAL PROTEIN S19P FAMILY MEMBER"/>
    <property type="match status" value="1"/>
</dbReference>
<dbReference type="PANTHER" id="PTHR11880:SF8">
    <property type="entry name" value="SMALL RIBOSOMAL SUBUNIT PROTEIN US19M"/>
    <property type="match status" value="1"/>
</dbReference>
<dbReference type="Pfam" id="PF00203">
    <property type="entry name" value="Ribosomal_S19"/>
    <property type="match status" value="1"/>
</dbReference>
<dbReference type="PIRSF" id="PIRSF002144">
    <property type="entry name" value="Ribosomal_S19"/>
    <property type="match status" value="1"/>
</dbReference>
<dbReference type="PRINTS" id="PR00975">
    <property type="entry name" value="RIBOSOMALS19"/>
</dbReference>
<dbReference type="SUPFAM" id="SSF54570">
    <property type="entry name" value="Ribosomal protein S19"/>
    <property type="match status" value="1"/>
</dbReference>
<dbReference type="PROSITE" id="PS00323">
    <property type="entry name" value="RIBOSOMAL_S19"/>
    <property type="match status" value="1"/>
</dbReference>
<keyword id="KW-0687">Ribonucleoprotein</keyword>
<keyword id="KW-0689">Ribosomal protein</keyword>
<keyword id="KW-0694">RNA-binding</keyword>
<keyword id="KW-0699">rRNA-binding</keyword>
<feature type="chain" id="PRO_1000127969" description="Small ribosomal subunit protein uS19">
    <location>
        <begin position="1"/>
        <end position="92"/>
    </location>
</feature>
<name>RS19_ECO5E</name>
<organism>
    <name type="scientific">Escherichia coli O157:H7 (strain EC4115 / EHEC)</name>
    <dbReference type="NCBI Taxonomy" id="444450"/>
    <lineage>
        <taxon>Bacteria</taxon>
        <taxon>Pseudomonadati</taxon>
        <taxon>Pseudomonadota</taxon>
        <taxon>Gammaproteobacteria</taxon>
        <taxon>Enterobacterales</taxon>
        <taxon>Enterobacteriaceae</taxon>
        <taxon>Escherichia</taxon>
    </lineage>
</organism>
<comment type="function">
    <text evidence="1">Protein S19 forms a complex with S13 that binds strongly to the 16S ribosomal RNA.</text>
</comment>
<comment type="similarity">
    <text evidence="1">Belongs to the universal ribosomal protein uS19 family.</text>
</comment>
<gene>
    <name evidence="1" type="primary">rpsS</name>
    <name type="ordered locus">ECH74115_4639</name>
</gene>
<sequence length="92" mass="10430">MPRSLKKGPFIDLHLLKKVEKAVESGDKKPLRTWSRRSTIFPNMIGLTIAVHNGRQHVPVFVTDEMVGHKLGEFAPTRTYRGHAADKKAKKK</sequence>
<accession>B5YTN7</accession>